<name>Y555_AQUAE</name>
<keyword id="KW-0472">Membrane</keyword>
<keyword id="KW-1185">Reference proteome</keyword>
<keyword id="KW-0812">Transmembrane</keyword>
<keyword id="KW-1133">Transmembrane helix</keyword>
<reference key="1">
    <citation type="journal article" date="1998" name="Nature">
        <title>The complete genome of the hyperthermophilic bacterium Aquifex aeolicus.</title>
        <authorList>
            <person name="Deckert G."/>
            <person name="Warren P.V."/>
            <person name="Gaasterland T."/>
            <person name="Young W.G."/>
            <person name="Lenox A.L."/>
            <person name="Graham D.E."/>
            <person name="Overbeek R."/>
            <person name="Snead M.A."/>
            <person name="Keller M."/>
            <person name="Aujay M."/>
            <person name="Huber R."/>
            <person name="Feldman R.A."/>
            <person name="Short J.M."/>
            <person name="Olsen G.J."/>
            <person name="Swanson R.V."/>
        </authorList>
    </citation>
    <scope>NUCLEOTIDE SEQUENCE [LARGE SCALE GENOMIC DNA]</scope>
    <source>
        <strain>VF5</strain>
    </source>
</reference>
<accession>O66830</accession>
<dbReference type="EMBL" id="AE000657">
    <property type="protein sequence ID" value="AAC06793.1"/>
    <property type="molecule type" value="Genomic_DNA"/>
</dbReference>
<dbReference type="PIR" id="B70350">
    <property type="entry name" value="B70350"/>
</dbReference>
<dbReference type="RefSeq" id="NP_213390.1">
    <property type="nucleotide sequence ID" value="NC_000918.1"/>
</dbReference>
<dbReference type="STRING" id="224324.aq_555"/>
<dbReference type="EnsemblBacteria" id="AAC06793">
    <property type="protein sequence ID" value="AAC06793"/>
    <property type="gene ID" value="aq_555"/>
</dbReference>
<dbReference type="KEGG" id="aae:aq_555"/>
<dbReference type="HOGENOM" id="CLU_1040681_0_0_0"/>
<dbReference type="InParanoid" id="O66830"/>
<dbReference type="Proteomes" id="UP000000798">
    <property type="component" value="Chromosome"/>
</dbReference>
<dbReference type="GO" id="GO:0016020">
    <property type="term" value="C:membrane"/>
    <property type="evidence" value="ECO:0007669"/>
    <property type="project" value="UniProtKB-SubCell"/>
</dbReference>
<organism>
    <name type="scientific">Aquifex aeolicus (strain VF5)</name>
    <dbReference type="NCBI Taxonomy" id="224324"/>
    <lineage>
        <taxon>Bacteria</taxon>
        <taxon>Pseudomonadati</taxon>
        <taxon>Aquificota</taxon>
        <taxon>Aquificia</taxon>
        <taxon>Aquificales</taxon>
        <taxon>Aquificaceae</taxon>
        <taxon>Aquifex</taxon>
    </lineage>
</organism>
<comment type="subcellular location">
    <subcellularLocation>
        <location evidence="2">Membrane</location>
        <topology evidence="2">Single-pass membrane protein</topology>
    </subcellularLocation>
</comment>
<sequence>MSSFASFLDMWRDLDKYLSSLTIFNIQSSFMRIFLLFLFFVLFTFGVEGYVIEEINGSTGLRIHKEIKRKVYITEDALITETEKEFMVQKIENGLPRIYRVIKSSKSYMDFSKMTPLFLVSLPFLDCKQRVCVVNRGAFRPTNEYKKIRGFKARKVVVESHALGKKTTLIQWYTKEWKELVEANRLEDKFYVNFIRAIMKEKNLSEANIPLKEIQNFLKEINEKFGGVVRTQQQMPLFNTYSEVISVKKTEIPDYIYKLPEGYTKIK</sequence>
<proteinExistence type="predicted"/>
<evidence type="ECO:0000255" key="1"/>
<evidence type="ECO:0000305" key="2"/>
<protein>
    <recommendedName>
        <fullName>Uncharacterized protein aq_555</fullName>
    </recommendedName>
</protein>
<feature type="chain" id="PRO_0000186869" description="Uncharacterized protein aq_555">
    <location>
        <begin position="1"/>
        <end position="267"/>
    </location>
</feature>
<feature type="transmembrane region" description="Helical" evidence="1">
    <location>
        <begin position="30"/>
        <end position="52"/>
    </location>
</feature>
<gene>
    <name type="ordered locus">aq_555</name>
</gene>